<gene>
    <name type="primary">nadR</name>
</gene>
<reference key="1">
    <citation type="journal article" date="1988" name="Gene">
        <title>Broad-host-range plasmid and M13 bacteriophage-derived vectors for promoter analysis in Escherichia coli and Pseudomonas aeruginosa.</title>
        <authorList>
            <person name="Konyecsni W.M."/>
            <person name="Deretic V."/>
        </authorList>
    </citation>
    <scope>NUCLEOTIDE SEQUENCE [GENOMIC DNA]</scope>
</reference>
<reference key="2">
    <citation type="journal article" date="1994" name="Nat. Genet.">
        <title>Large scale bacterial gene discovery by similarity search.</title>
        <authorList>
            <person name="Robison K."/>
            <person name="Gilbert W."/>
            <person name="Church G.M."/>
        </authorList>
    </citation>
    <scope>IDENTIFICATION</scope>
</reference>
<protein>
    <recommendedName>
        <fullName>Trifunctional NAD biosynthesis/regulator protein NadR</fullName>
    </recommendedName>
    <domain>
        <recommendedName>
            <fullName>Transcriptional regulator NadR</fullName>
        </recommendedName>
    </domain>
    <domain>
        <recommendedName>
            <fullName>Nicotinamide mononucleotide adenylyltransferase</fullName>
            <shortName>NMN adenylyltransferase</shortName>
            <shortName>NMN-AT</shortName>
            <shortName>NMNAT</shortName>
            <ecNumber>2.7.7.1</ecNumber>
        </recommendedName>
        <alternativeName>
            <fullName>Nicotinamide ribonucleotide adenylyltransferase</fullName>
        </alternativeName>
        <alternativeName>
            <fullName>Nicotinamide-nucleotide adenylyltransferase</fullName>
        </alternativeName>
    </domain>
    <domain>
        <recommendedName>
            <fullName>Ribosylnicotinamide kinase</fullName>
            <shortName>RNK</shortName>
            <ecNumber>2.7.1.22</ecNumber>
        </recommendedName>
        <alternativeName>
            <fullName>Nicotinamide riboside kinase</fullName>
            <shortName>NRK</shortName>
            <shortName>NmR-K</shortName>
        </alternativeName>
    </domain>
</protein>
<organism>
    <name type="scientific">Klebsiella pneumoniae</name>
    <dbReference type="NCBI Taxonomy" id="573"/>
    <lineage>
        <taxon>Bacteria</taxon>
        <taxon>Pseudomonadati</taxon>
        <taxon>Pseudomonadota</taxon>
        <taxon>Gammaproteobacteria</taxon>
        <taxon>Enterobacterales</taxon>
        <taxon>Enterobacteriaceae</taxon>
        <taxon>Klebsiella/Raoultella group</taxon>
        <taxon>Klebsiella</taxon>
        <taxon>Klebsiella pneumoniae complex</taxon>
    </lineage>
</organism>
<sequence length="47" mass="5278">MSSFDYLKSAIKQKGCTLDEVAEPSGMTKGYLSQLLNRKIKARARRS</sequence>
<feature type="chain" id="PRO_0000096690" description="Trifunctional NAD biosynthesis/regulator protein NadR">
    <location>
        <begin position="1"/>
        <end position="47" status="greater than"/>
    </location>
</feature>
<feature type="domain" description="HTH cro/C1-type" evidence="2">
    <location>
        <begin position="7"/>
        <end position="47" status="greater than"/>
    </location>
</feature>
<feature type="DNA-binding region" description="H-T-H motif" evidence="2">
    <location>
        <begin position="18"/>
        <end position="37"/>
    </location>
</feature>
<feature type="non-terminal residue">
    <location>
        <position position="47"/>
    </location>
</feature>
<proteinExistence type="inferred from homology"/>
<dbReference type="EC" id="2.7.7.1"/>
<dbReference type="EC" id="2.7.1.22"/>
<dbReference type="EMBL" id="M28676">
    <property type="status" value="NOT_ANNOTATED_CDS"/>
    <property type="molecule type" value="Genomic_DNA"/>
</dbReference>
<dbReference type="SMR" id="P47981"/>
<dbReference type="UniPathway" id="UPA00253"/>
<dbReference type="UniPathway" id="UPA00253">
    <property type="reaction ID" value="UER00600"/>
</dbReference>
<dbReference type="GO" id="GO:0005737">
    <property type="term" value="C:cytoplasm"/>
    <property type="evidence" value="ECO:0007669"/>
    <property type="project" value="UniProtKB-SubCell"/>
</dbReference>
<dbReference type="GO" id="GO:0005886">
    <property type="term" value="C:plasma membrane"/>
    <property type="evidence" value="ECO:0007669"/>
    <property type="project" value="UniProtKB-SubCell"/>
</dbReference>
<dbReference type="GO" id="GO:0005524">
    <property type="term" value="F:ATP binding"/>
    <property type="evidence" value="ECO:0007669"/>
    <property type="project" value="UniProtKB-KW"/>
</dbReference>
<dbReference type="GO" id="GO:0003677">
    <property type="term" value="F:DNA binding"/>
    <property type="evidence" value="ECO:0007669"/>
    <property type="project" value="UniProtKB-KW"/>
</dbReference>
<dbReference type="GO" id="GO:0000309">
    <property type="term" value="F:nicotinamide-nucleotide adenylyltransferase activity"/>
    <property type="evidence" value="ECO:0007669"/>
    <property type="project" value="UniProtKB-EC"/>
</dbReference>
<dbReference type="GO" id="GO:0050262">
    <property type="term" value="F:ribosylnicotinamide kinase activity"/>
    <property type="evidence" value="ECO:0007669"/>
    <property type="project" value="UniProtKB-EC"/>
</dbReference>
<dbReference type="GO" id="GO:0009435">
    <property type="term" value="P:NAD biosynthetic process"/>
    <property type="evidence" value="ECO:0007669"/>
    <property type="project" value="UniProtKB-UniPathway"/>
</dbReference>
<dbReference type="InterPro" id="IPR001387">
    <property type="entry name" value="Cro/C1-type_HTH"/>
</dbReference>
<dbReference type="InterPro" id="IPR010982">
    <property type="entry name" value="Lambda_DNA-bd_dom_sf"/>
</dbReference>
<dbReference type="SUPFAM" id="SSF47413">
    <property type="entry name" value="lambda repressor-like DNA-binding domains"/>
    <property type="match status" value="1"/>
</dbReference>
<keyword id="KW-0067">ATP-binding</keyword>
<keyword id="KW-1003">Cell membrane</keyword>
<keyword id="KW-0963">Cytoplasm</keyword>
<keyword id="KW-0238">DNA-binding</keyword>
<keyword id="KW-0418">Kinase</keyword>
<keyword id="KW-0472">Membrane</keyword>
<keyword id="KW-0511">Multifunctional enzyme</keyword>
<keyword id="KW-0520">NAD</keyword>
<keyword id="KW-0547">Nucleotide-binding</keyword>
<keyword id="KW-0662">Pyridine nucleotide biosynthesis</keyword>
<keyword id="KW-0678">Repressor</keyword>
<keyword id="KW-0804">Transcription</keyword>
<keyword id="KW-0805">Transcription regulation</keyword>
<keyword id="KW-0808">Transferase</keyword>
<accession>P47981</accession>
<comment type="function">
    <text evidence="1">This enzyme has three activities: DNA binding, nicotinamide mononucleotide (NMN) adenylyltransferase and ribosylnicotinamide (RN) kinase. The DNA-binding domain binds to the nadB operator sequence in an NAD- and ATP-dependent manner. As NAD levels increase within the cell, the affinity of NadR for the nadB operator regions of nadA, nadB, and pncB increases, repressing the transcription of these genes. The RN kinase activity catalyzes the phosphorylation of RN to form nicotinamide ribonucleotide. The NMN adenylyltransferase activity catalyzes the transfer of the AMP moiety of ATP to nicotinamide ribonucleotide to form NAD(+). The NMN adenylyltransferase domain also functions as the NAD and ATP sensor (By similarity).</text>
</comment>
<comment type="catalytic activity">
    <reaction>
        <text>beta-nicotinamide D-ribonucleotide + ATP + H(+) = diphosphate + NAD(+)</text>
        <dbReference type="Rhea" id="RHEA:21360"/>
        <dbReference type="ChEBI" id="CHEBI:14649"/>
        <dbReference type="ChEBI" id="CHEBI:15378"/>
        <dbReference type="ChEBI" id="CHEBI:30616"/>
        <dbReference type="ChEBI" id="CHEBI:33019"/>
        <dbReference type="ChEBI" id="CHEBI:57540"/>
        <dbReference type="EC" id="2.7.7.1"/>
    </reaction>
</comment>
<comment type="catalytic activity">
    <reaction>
        <text>beta-nicotinamide D-riboside + ATP = beta-nicotinamide D-ribonucleotide + ADP + H(+)</text>
        <dbReference type="Rhea" id="RHEA:14017"/>
        <dbReference type="ChEBI" id="CHEBI:14649"/>
        <dbReference type="ChEBI" id="CHEBI:15378"/>
        <dbReference type="ChEBI" id="CHEBI:15927"/>
        <dbReference type="ChEBI" id="CHEBI:30616"/>
        <dbReference type="ChEBI" id="CHEBI:456216"/>
        <dbReference type="EC" id="2.7.1.22"/>
    </reaction>
</comment>
<comment type="pathway">
    <text>Cofactor biosynthesis; NAD(+) biosynthesis [regulation].</text>
</comment>
<comment type="pathway">
    <text>Cofactor biosynthesis; NAD(+) biosynthesis; NAD(+) from nicotinamide D-ribonucleotide: step 1/1.</text>
</comment>
<comment type="subcellular location">
    <subcellularLocation>
        <location>Cell membrane</location>
        <topology>Peripheral membrane protein</topology>
    </subcellularLocation>
    <subcellularLocation>
        <location evidence="1">Cytoplasm</location>
    </subcellularLocation>
</comment>
<evidence type="ECO:0000250" key="1"/>
<evidence type="ECO:0000255" key="2">
    <source>
        <dbReference type="PROSITE-ProRule" id="PRU00257"/>
    </source>
</evidence>
<name>NADR_KLEPN</name>